<accession>Q4R6M5</accession>
<protein>
    <recommendedName>
        <fullName>Probable ATP-dependent RNA helicase DDX5</fullName>
        <ecNumber>3.6.4.13</ecNumber>
    </recommendedName>
    <alternativeName>
        <fullName>DEAD box protein 5</fullName>
    </alternativeName>
</protein>
<feature type="chain" id="PRO_0000252205" description="Probable ATP-dependent RNA helicase DDX5">
    <location>
        <begin position="1"/>
        <end position="614"/>
    </location>
</feature>
<feature type="domain" description="Helicase ATP-binding" evidence="4">
    <location>
        <begin position="125"/>
        <end position="300"/>
    </location>
</feature>
<feature type="domain" description="Helicase C-terminal" evidence="5">
    <location>
        <begin position="328"/>
        <end position="475"/>
    </location>
</feature>
<feature type="region of interest" description="Disordered" evidence="6">
    <location>
        <begin position="1"/>
        <end position="39"/>
    </location>
</feature>
<feature type="region of interest" description="Transactivation domain" evidence="1">
    <location>
        <begin position="477"/>
        <end position="614"/>
    </location>
</feature>
<feature type="region of interest" description="Disordered" evidence="6">
    <location>
        <begin position="477"/>
        <end position="504"/>
    </location>
</feature>
<feature type="short sequence motif" description="Q motif">
    <location>
        <begin position="94"/>
        <end position="122"/>
    </location>
</feature>
<feature type="short sequence motif" description="DEAD box">
    <location>
        <begin position="248"/>
        <end position="251"/>
    </location>
</feature>
<feature type="compositionally biased region" description="Basic and acidic residues" evidence="6">
    <location>
        <begin position="1"/>
        <end position="15"/>
    </location>
</feature>
<feature type="compositionally biased region" description="Basic and acidic residues" evidence="6">
    <location>
        <begin position="488"/>
        <end position="498"/>
    </location>
</feature>
<feature type="binding site" evidence="4">
    <location>
        <begin position="114"/>
        <end position="116"/>
    </location>
    <ligand>
        <name>ATP</name>
        <dbReference type="ChEBI" id="CHEBI:30616"/>
    </ligand>
</feature>
<feature type="binding site" evidence="1">
    <location>
        <position position="121"/>
    </location>
    <ligand>
        <name>ATP</name>
        <dbReference type="ChEBI" id="CHEBI:30616"/>
    </ligand>
</feature>
<feature type="binding site" evidence="4">
    <location>
        <begin position="138"/>
        <end position="145"/>
    </location>
    <ligand>
        <name>ATP</name>
        <dbReference type="ChEBI" id="CHEBI:30616"/>
    </ligand>
</feature>
<feature type="modified residue" description="Phosphoserine" evidence="2">
    <location>
        <position position="24"/>
    </location>
</feature>
<feature type="modified residue" description="N6-acetyllysine; alternate" evidence="2">
    <location>
        <position position="32"/>
    </location>
</feature>
<feature type="modified residue" description="N6-acetyllysine" evidence="2">
    <location>
        <position position="33"/>
    </location>
</feature>
<feature type="modified residue" description="N6-acetyllysine" evidence="2">
    <location>
        <position position="40"/>
    </location>
</feature>
<feature type="modified residue" description="N6-acetyllysine" evidence="3">
    <location>
        <position position="236"/>
    </location>
</feature>
<feature type="modified residue" description="Phosphotyrosine" evidence="2">
    <location>
        <position position="297"/>
    </location>
</feature>
<feature type="modified residue" description="Phosphoserine" evidence="2">
    <location>
        <position position="480"/>
    </location>
</feature>
<feature type="modified residue" description="Phosphoserine" evidence="2">
    <location>
        <position position="520"/>
    </location>
</feature>
<feature type="cross-link" description="Glycyl lysine isopeptide (Lys-Gly) (interchain with G-Cter in SUMO2); alternate" evidence="2">
    <location>
        <position position="32"/>
    </location>
</feature>
<feature type="cross-link" description="Glycyl lysine isopeptide (Lys-Gly) (interchain with G-Cter in SUMO2)" evidence="2">
    <location>
        <position position="45"/>
    </location>
</feature>
<feature type="cross-link" description="Glycyl lysine isopeptide (Lys-Gly) (interchain with G-Cter in SUMO); alternate" evidence="1">
    <location>
        <position position="53"/>
    </location>
</feature>
<feature type="cross-link" description="Glycyl lysine isopeptide (Lys-Gly) (interchain with G-Cter in SUMO1); alternate" evidence="2">
    <location>
        <position position="53"/>
    </location>
</feature>
<feature type="cross-link" description="Glycyl lysine isopeptide (Lys-Gly) (interchain with G-Cter in SUMO2); alternate" evidence="2">
    <location>
        <position position="53"/>
    </location>
</feature>
<feature type="cross-link" description="Glycyl lysine isopeptide (Lys-Gly) (interchain with G-Cter in SUMO2)" evidence="2">
    <location>
        <position position="340"/>
    </location>
</feature>
<feature type="cross-link" description="Glycyl lysine isopeptide (Lys-Gly) (interchain with G-Cter in SUMO2)" evidence="2">
    <location>
        <position position="343"/>
    </location>
</feature>
<feature type="cross-link" description="Glycyl lysine isopeptide (Lys-Gly) (interchain with G-Cter in SUMO2)" evidence="2">
    <location>
        <position position="388"/>
    </location>
</feature>
<feature type="cross-link" description="Glycyl lysine isopeptide (Lys-Gly) (interchain with G-Cter in SUMO2)" evidence="2">
    <location>
        <position position="391"/>
    </location>
</feature>
<feature type="cross-link" description="Glycyl lysine isopeptide (Lys-Gly) (interchain with G-Cter in SUMO2)" evidence="2">
    <location>
        <position position="411"/>
    </location>
</feature>
<feature type="cross-link" description="Glycyl lysine isopeptide (Lys-Gly) (interchain with G-Cter in SUMO2)" evidence="2">
    <location>
        <position position="437"/>
    </location>
</feature>
<feature type="cross-link" description="Glycyl lysine isopeptide (Lys-Gly) (interchain with G-Cter in SUMO2)" evidence="2">
    <location>
        <position position="451"/>
    </location>
</feature>
<feature type="cross-link" description="Glycyl lysine isopeptide (Lys-Gly) (interchain with G-Cter in SUMO2)" evidence="2">
    <location>
        <position position="470"/>
    </location>
</feature>
<feature type="cross-link" description="Glycyl lysine isopeptide (Lys-Gly) (interchain with G-Cter in SUMO2)" evidence="2">
    <location>
        <position position="523"/>
    </location>
</feature>
<comment type="function">
    <text evidence="1">Involved in the alternative regulation of pre-mRNA splicing; its RNA helicase activity is necessary for increasing tau exon 10 inclusion and occurs in a RBM4-dependent manner. Binds to the tau pre-mRNA in the stem-loop region downstream of exon 10. The rate of ATP hydrolysis is highly stimulated by single-stranded RNA. Involved in transcriptional regulation; the function is independent of the RNA helicase activity. Transcriptional coactivator for androgen receptor AR but probably not ESR1. Synergizes with DDX17 and SRA1 RNA to activate MYOD1 transcriptional activity and involved in skeletal muscle differentiation. Transcriptional coactivator for p53/TP53 and involved in p53/TP53 transcriptional response to DNA damage and p53/TP53-dependent apoptosis. Transcriptional coactivator for RUNX2 and involved in regulation of osteoblast differentiation. Acts as a transcriptional repressor in a promoter-specific manner; the function probably involves association with histone deacetylases, such as HDAC1. As component of a large PER complex is involved in the inhibition of 3' transcriptional termination of circadian target genes such as PER1 and NR1D1 and the control of the circadian rhythms (By similarity).</text>
</comment>
<comment type="catalytic activity">
    <reaction>
        <text>ATP + H2O = ADP + phosphate + H(+)</text>
        <dbReference type="Rhea" id="RHEA:13065"/>
        <dbReference type="ChEBI" id="CHEBI:15377"/>
        <dbReference type="ChEBI" id="CHEBI:15378"/>
        <dbReference type="ChEBI" id="CHEBI:30616"/>
        <dbReference type="ChEBI" id="CHEBI:43474"/>
        <dbReference type="ChEBI" id="CHEBI:456216"/>
        <dbReference type="EC" id="3.6.4.13"/>
    </reaction>
</comment>
<comment type="subunit">
    <text evidence="2 3">Identified in the spliceosome C complex. Component of a ribonucleoprotein complex containing mRNAs and RNA-binding proteins including DDX5, HNRNPH2 and SRSF1 as well as splicing regulator ARVCF. Interacts with RBM4; the interaction occurs in an RNA-independent manner. Interacts with AGO1 and AGO2. Interacts with ESR1, AR, EP300, CREBBP, POLR2A, TP53, RUNX2 and HDAC1. Self-associates. Interacts with DDX17. Interacts with BRDT. The large PER complex involved in the repression of transcriptional termination is composed of at least PER2, CDK9, DDX5, DHX9, NCBP1 and POLR2A (active) (By similarity). Interacts with DHX36; this interaction occurs in a RNA-dependent manner (By similarity). Interacts with NUPR1 (By similarity). Interacts with ERCC6 (By similarity). Interacts with DDX3X in the cytoplasm; this interaction may be more efficient when both proteins are unphosphorylated (By similarity).</text>
</comment>
<comment type="subcellular location">
    <subcellularLocation>
        <location evidence="2">Nucleus</location>
    </subcellularLocation>
    <subcellularLocation>
        <location evidence="2">Nucleus</location>
        <location evidence="2">Nucleolus</location>
    </subcellularLocation>
    <subcellularLocation>
        <location evidence="2">Cytoplasm</location>
    </subcellularLocation>
    <text evidence="2">During the G0 phase, predominantly located in the nucleus. Cytoplasmic levels increase during the G1/S phase. During the M phase, located at the vicinity of the condensed chromosomes. At G1, localizes in the cytoplasm.</text>
</comment>
<comment type="PTM">
    <text evidence="2">Sumoylated; sumoylation, promoted by PIAS1, promotes interaction with HDAC1 and transcriptional repression activity. Sumoylation also significantly increases stability, and reduces polyubiquitination (By similarity).</text>
</comment>
<comment type="PTM">
    <text evidence="2">Polyubiquitinated, leading to proteasomal degradation.</text>
</comment>
<comment type="PTM">
    <text evidence="2">Weakly phosphorylated in the G1/S phase of the cell cycle and much more at G2/M, especially at Thr and Tyr residues.</text>
</comment>
<comment type="similarity">
    <text evidence="7">Belongs to the DEAD box helicase family. DDX5/DBP2 subfamily.</text>
</comment>
<evidence type="ECO:0000250" key="1"/>
<evidence type="ECO:0000250" key="2">
    <source>
        <dbReference type="UniProtKB" id="P17844"/>
    </source>
</evidence>
<evidence type="ECO:0000250" key="3">
    <source>
        <dbReference type="UniProtKB" id="Q61656"/>
    </source>
</evidence>
<evidence type="ECO:0000255" key="4">
    <source>
        <dbReference type="PROSITE-ProRule" id="PRU00541"/>
    </source>
</evidence>
<evidence type="ECO:0000255" key="5">
    <source>
        <dbReference type="PROSITE-ProRule" id="PRU00542"/>
    </source>
</evidence>
<evidence type="ECO:0000256" key="6">
    <source>
        <dbReference type="SAM" id="MobiDB-lite"/>
    </source>
</evidence>
<evidence type="ECO:0000305" key="7"/>
<organism>
    <name type="scientific">Macaca fascicularis</name>
    <name type="common">Crab-eating macaque</name>
    <name type="synonym">Cynomolgus monkey</name>
    <dbReference type="NCBI Taxonomy" id="9541"/>
    <lineage>
        <taxon>Eukaryota</taxon>
        <taxon>Metazoa</taxon>
        <taxon>Chordata</taxon>
        <taxon>Craniata</taxon>
        <taxon>Vertebrata</taxon>
        <taxon>Euteleostomi</taxon>
        <taxon>Mammalia</taxon>
        <taxon>Eutheria</taxon>
        <taxon>Euarchontoglires</taxon>
        <taxon>Primates</taxon>
        <taxon>Haplorrhini</taxon>
        <taxon>Catarrhini</taxon>
        <taxon>Cercopithecidae</taxon>
        <taxon>Cercopithecinae</taxon>
        <taxon>Macaca</taxon>
    </lineage>
</organism>
<keyword id="KW-0007">Acetylation</keyword>
<keyword id="KW-0067">ATP-binding</keyword>
<keyword id="KW-0090">Biological rhythms</keyword>
<keyword id="KW-0963">Cytoplasm</keyword>
<keyword id="KW-0347">Helicase</keyword>
<keyword id="KW-0378">Hydrolase</keyword>
<keyword id="KW-1017">Isopeptide bond</keyword>
<keyword id="KW-0488">Methylation</keyword>
<keyword id="KW-0507">mRNA processing</keyword>
<keyword id="KW-0508">mRNA splicing</keyword>
<keyword id="KW-0547">Nucleotide-binding</keyword>
<keyword id="KW-0539">Nucleus</keyword>
<keyword id="KW-0597">Phosphoprotein</keyword>
<keyword id="KW-1185">Reference proteome</keyword>
<keyword id="KW-0694">RNA-binding</keyword>
<keyword id="KW-0747">Spliceosome</keyword>
<keyword id="KW-0804">Transcription</keyword>
<keyword id="KW-0805">Transcription regulation</keyword>
<keyword id="KW-0832">Ubl conjugation</keyword>
<name>DDX5_MACFA</name>
<gene>
    <name type="primary">DDX5</name>
    <name type="ORF">QtsA-17658</name>
</gene>
<dbReference type="EC" id="3.6.4.13"/>
<dbReference type="EMBL" id="AB169157">
    <property type="protein sequence ID" value="BAE01250.1"/>
    <property type="molecule type" value="mRNA"/>
</dbReference>
<dbReference type="RefSeq" id="NP_001271918.1">
    <property type="nucleotide sequence ID" value="NM_001284989.1"/>
</dbReference>
<dbReference type="SMR" id="Q4R6M5"/>
<dbReference type="STRING" id="9541.ENSMFAP00000013388"/>
<dbReference type="eggNOG" id="KOG0331">
    <property type="taxonomic scope" value="Eukaryota"/>
</dbReference>
<dbReference type="Proteomes" id="UP000233100">
    <property type="component" value="Unplaced"/>
</dbReference>
<dbReference type="GO" id="GO:0005737">
    <property type="term" value="C:cytoplasm"/>
    <property type="evidence" value="ECO:0007669"/>
    <property type="project" value="UniProtKB-SubCell"/>
</dbReference>
<dbReference type="GO" id="GO:0016607">
    <property type="term" value="C:nuclear speck"/>
    <property type="evidence" value="ECO:0000250"/>
    <property type="project" value="UniProtKB"/>
</dbReference>
<dbReference type="GO" id="GO:0005730">
    <property type="term" value="C:nucleolus"/>
    <property type="evidence" value="ECO:0000250"/>
    <property type="project" value="UniProtKB"/>
</dbReference>
<dbReference type="GO" id="GO:0005634">
    <property type="term" value="C:nucleus"/>
    <property type="evidence" value="ECO:0000250"/>
    <property type="project" value="UniProtKB"/>
</dbReference>
<dbReference type="GO" id="GO:0005681">
    <property type="term" value="C:spliceosomal complex"/>
    <property type="evidence" value="ECO:0007669"/>
    <property type="project" value="UniProtKB-KW"/>
</dbReference>
<dbReference type="GO" id="GO:0005524">
    <property type="term" value="F:ATP binding"/>
    <property type="evidence" value="ECO:0007669"/>
    <property type="project" value="UniProtKB-KW"/>
</dbReference>
<dbReference type="GO" id="GO:0016887">
    <property type="term" value="F:ATP hydrolysis activity"/>
    <property type="evidence" value="ECO:0007669"/>
    <property type="project" value="RHEA"/>
</dbReference>
<dbReference type="GO" id="GO:0003730">
    <property type="term" value="F:mRNA 3'-UTR binding"/>
    <property type="evidence" value="ECO:0000250"/>
    <property type="project" value="UniProtKB"/>
</dbReference>
<dbReference type="GO" id="GO:0050681">
    <property type="term" value="F:nuclear androgen receptor binding"/>
    <property type="evidence" value="ECO:0000250"/>
    <property type="project" value="UniProtKB"/>
</dbReference>
<dbReference type="GO" id="GO:1990841">
    <property type="term" value="F:promoter-specific chromatin binding"/>
    <property type="evidence" value="ECO:0000250"/>
    <property type="project" value="UniProtKB"/>
</dbReference>
<dbReference type="GO" id="GO:0043021">
    <property type="term" value="F:ribonucleoprotein complex binding"/>
    <property type="evidence" value="ECO:0000250"/>
    <property type="project" value="UniProtKB"/>
</dbReference>
<dbReference type="GO" id="GO:0003724">
    <property type="term" value="F:RNA helicase activity"/>
    <property type="evidence" value="ECO:0000250"/>
    <property type="project" value="UniProtKB"/>
</dbReference>
<dbReference type="GO" id="GO:0000380">
    <property type="term" value="P:alternative mRNA splicing, via spliceosome"/>
    <property type="evidence" value="ECO:0000250"/>
    <property type="project" value="UniProtKB"/>
</dbReference>
<dbReference type="GO" id="GO:0030521">
    <property type="term" value="P:androgen receptor signaling pathway"/>
    <property type="evidence" value="ECO:0000250"/>
    <property type="project" value="UniProtKB"/>
</dbReference>
<dbReference type="GO" id="GO:0001837">
    <property type="term" value="P:epithelial to mesenchymal transition"/>
    <property type="evidence" value="ECO:0000250"/>
    <property type="project" value="UniProtKB"/>
</dbReference>
<dbReference type="GO" id="GO:0030520">
    <property type="term" value="P:estrogen receptor signaling pathway"/>
    <property type="evidence" value="ECO:0000250"/>
    <property type="project" value="UniProtKB"/>
</dbReference>
<dbReference type="GO" id="GO:0072332">
    <property type="term" value="P:intrinsic apoptotic signaling pathway by p53 class mediator"/>
    <property type="evidence" value="ECO:0000250"/>
    <property type="project" value="UniProtKB"/>
</dbReference>
<dbReference type="GO" id="GO:0061614">
    <property type="term" value="P:miRNA transcription"/>
    <property type="evidence" value="ECO:0000250"/>
    <property type="project" value="UniProtKB"/>
</dbReference>
<dbReference type="GO" id="GO:0045445">
    <property type="term" value="P:myoblast differentiation"/>
    <property type="evidence" value="ECO:0000250"/>
    <property type="project" value="UniProtKB"/>
</dbReference>
<dbReference type="GO" id="GO:0000122">
    <property type="term" value="P:negative regulation of transcription by RNA polymerase II"/>
    <property type="evidence" value="ECO:0000250"/>
    <property type="project" value="UniProtKB"/>
</dbReference>
<dbReference type="GO" id="GO:0000956">
    <property type="term" value="P:nuclear-transcribed mRNA catabolic process"/>
    <property type="evidence" value="ECO:0000250"/>
    <property type="project" value="UniProtKB"/>
</dbReference>
<dbReference type="GO" id="GO:0043517">
    <property type="term" value="P:positive regulation of DNA damage response, signal transduction by p53 class mediator"/>
    <property type="evidence" value="ECO:0000250"/>
    <property type="project" value="UniProtKB"/>
</dbReference>
<dbReference type="GO" id="GO:0000381">
    <property type="term" value="P:regulation of alternative mRNA splicing, via spliceosome"/>
    <property type="evidence" value="ECO:0000250"/>
    <property type="project" value="UniProtKB"/>
</dbReference>
<dbReference type="GO" id="GO:0060765">
    <property type="term" value="P:regulation of androgen receptor signaling pathway"/>
    <property type="evidence" value="ECO:0000250"/>
    <property type="project" value="UniProtKB"/>
</dbReference>
<dbReference type="GO" id="GO:0045667">
    <property type="term" value="P:regulation of osteoblast differentiation"/>
    <property type="evidence" value="ECO:0000250"/>
    <property type="project" value="UniProtKB"/>
</dbReference>
<dbReference type="GO" id="GO:2001014">
    <property type="term" value="P:regulation of skeletal muscle cell differentiation"/>
    <property type="evidence" value="ECO:0000250"/>
    <property type="project" value="UniProtKB"/>
</dbReference>
<dbReference type="GO" id="GO:0006357">
    <property type="term" value="P:regulation of transcription by RNA polymerase II"/>
    <property type="evidence" value="ECO:0000250"/>
    <property type="project" value="UniProtKB"/>
</dbReference>
<dbReference type="GO" id="GO:0048511">
    <property type="term" value="P:rhythmic process"/>
    <property type="evidence" value="ECO:0007669"/>
    <property type="project" value="UniProtKB-KW"/>
</dbReference>
<dbReference type="CDD" id="cd18049">
    <property type="entry name" value="DEADc_DDX5"/>
    <property type="match status" value="1"/>
</dbReference>
<dbReference type="CDD" id="cd18787">
    <property type="entry name" value="SF2_C_DEAD"/>
    <property type="match status" value="1"/>
</dbReference>
<dbReference type="FunFam" id="3.40.50.300:FF:000008">
    <property type="entry name" value="ATP-dependent RNA helicase RhlB"/>
    <property type="match status" value="1"/>
</dbReference>
<dbReference type="FunFam" id="3.40.50.300:FF:000079">
    <property type="entry name" value="probable ATP-dependent RNA helicase DDX17"/>
    <property type="match status" value="1"/>
</dbReference>
<dbReference type="Gene3D" id="3.40.50.300">
    <property type="entry name" value="P-loop containing nucleotide triphosphate hydrolases"/>
    <property type="match status" value="2"/>
</dbReference>
<dbReference type="InterPro" id="IPR011545">
    <property type="entry name" value="DEAD/DEAH_box_helicase_dom"/>
</dbReference>
<dbReference type="InterPro" id="IPR014001">
    <property type="entry name" value="Helicase_ATP-bd"/>
</dbReference>
<dbReference type="InterPro" id="IPR001650">
    <property type="entry name" value="Helicase_C-like"/>
</dbReference>
<dbReference type="InterPro" id="IPR027417">
    <property type="entry name" value="P-loop_NTPase"/>
</dbReference>
<dbReference type="InterPro" id="IPR012587">
    <property type="entry name" value="P68_rpt"/>
</dbReference>
<dbReference type="InterPro" id="IPR000629">
    <property type="entry name" value="RNA-helicase_DEAD-box_CS"/>
</dbReference>
<dbReference type="InterPro" id="IPR014014">
    <property type="entry name" value="RNA_helicase_DEAD_Q_motif"/>
</dbReference>
<dbReference type="PANTHER" id="PTHR47958">
    <property type="entry name" value="ATP-DEPENDENT RNA HELICASE DBP3"/>
    <property type="match status" value="1"/>
</dbReference>
<dbReference type="Pfam" id="PF00270">
    <property type="entry name" value="DEAD"/>
    <property type="match status" value="1"/>
</dbReference>
<dbReference type="Pfam" id="PF00271">
    <property type="entry name" value="Helicase_C"/>
    <property type="match status" value="1"/>
</dbReference>
<dbReference type="Pfam" id="PF08061">
    <property type="entry name" value="P68HR"/>
    <property type="match status" value="2"/>
</dbReference>
<dbReference type="SMART" id="SM00487">
    <property type="entry name" value="DEXDc"/>
    <property type="match status" value="1"/>
</dbReference>
<dbReference type="SMART" id="SM00490">
    <property type="entry name" value="HELICc"/>
    <property type="match status" value="1"/>
</dbReference>
<dbReference type="SMART" id="SM01414">
    <property type="entry name" value="P68HR"/>
    <property type="match status" value="2"/>
</dbReference>
<dbReference type="SUPFAM" id="SSF52540">
    <property type="entry name" value="P-loop containing nucleoside triphosphate hydrolases"/>
    <property type="match status" value="1"/>
</dbReference>
<dbReference type="PROSITE" id="PS00039">
    <property type="entry name" value="DEAD_ATP_HELICASE"/>
    <property type="match status" value="1"/>
</dbReference>
<dbReference type="PROSITE" id="PS51192">
    <property type="entry name" value="HELICASE_ATP_BIND_1"/>
    <property type="match status" value="1"/>
</dbReference>
<dbReference type="PROSITE" id="PS51194">
    <property type="entry name" value="HELICASE_CTER"/>
    <property type="match status" value="1"/>
</dbReference>
<dbReference type="PROSITE" id="PS51195">
    <property type="entry name" value="Q_MOTIF"/>
    <property type="match status" value="1"/>
</dbReference>
<proteinExistence type="evidence at transcript level"/>
<reference key="1">
    <citation type="submission" date="2005-06" db="EMBL/GenBank/DDBJ databases">
        <title>DNA sequences of macaque genes expressed in brain or testis and its evolutionary implications.</title>
        <authorList>
            <consortium name="International consortium for macaque cDNA sequencing and analysis"/>
        </authorList>
    </citation>
    <scope>NUCLEOTIDE SEQUENCE [LARGE SCALE MRNA]</scope>
    <source>
        <tissue>Testis</tissue>
    </source>
</reference>
<sequence length="614" mass="69090">MSGYSSDRDRGRDRGFGAPRFGGSRAGPLSGKKFGNPGEKLVKKKWNLDELPKFEKNFYQEHPDLARRTAQEVETYRRSKEITVRGHNCPKPVLNFYEANFPANVMDVIARQNFTEPTAIQAQGWPVALSGLDMVGVAQTGSGKTLSYLLPAIVHINHQPFLERGDGPICLVLAPTRELAQQVQQVAAEYCRACRLKSTCIYGGAPKGPQIRDLERGVEICIATPGRLIDFLECGKTNLRRTTYLVLDEADRMLDMGFEPQIRKIVDQIRPDRQTLMWSATWPKEVRQLAEDFLKDYIHINIGALELSANHNILQIVDVCHDVEKDEKLIRLMEEIMSEKENKTIVFVETKRRCDELTRKMRRDGWPAMGIHGDKSQQERGWVLNEFKHGKAPILIATDVASRGLDVEDVKFVINYDYPNSSEDYIHRIGRTARSTKTGTAYTFFTPNNIKQVSDLISVLREANQAINPKLLQLVEDRGSGRSRGRGGMKDDRRDRYSAGKRGGFNTFRDRENYDRGYSSLLKRDFGAKTQNGVYSAANYTNGSFGSNFVSAGIQTSFRTGNPTGTYQNGYDSTQQYGSNVPNMHNGMNQQAYAYPATAAAPMIGYPMPTGYSQ</sequence>